<reference key="1">
    <citation type="submission" date="2007-03" db="EMBL/GenBank/DDBJ databases">
        <authorList>
            <consortium name="NIH - Xenopus Gene Collection (XGC) project"/>
        </authorList>
    </citation>
    <scope>NUCLEOTIDE SEQUENCE [LARGE SCALE MRNA]</scope>
    <source>
        <tissue>Embryo</tissue>
    </source>
</reference>
<dbReference type="EC" id="3.5.99.6" evidence="2"/>
<dbReference type="EMBL" id="BC135724">
    <property type="protein sequence ID" value="AAI35725.1"/>
    <property type="molecule type" value="mRNA"/>
</dbReference>
<dbReference type="RefSeq" id="NP_001096324.1">
    <property type="nucleotide sequence ID" value="NM_001102854.1"/>
</dbReference>
<dbReference type="SMR" id="A4IHW6"/>
<dbReference type="FunCoup" id="A4IHW6">
    <property type="interactions" value="2775"/>
</dbReference>
<dbReference type="STRING" id="8364.ENSXETP00000018016"/>
<dbReference type="PaxDb" id="8364-ENSXETP00000060035"/>
<dbReference type="DNASU" id="100124908"/>
<dbReference type="GeneID" id="100124908"/>
<dbReference type="KEGG" id="xtr:100124908"/>
<dbReference type="AGR" id="Xenbase:XB-GENE-983383"/>
<dbReference type="CTD" id="132789"/>
<dbReference type="Xenbase" id="XB-GENE-983383">
    <property type="gene designation" value="gnpda2"/>
</dbReference>
<dbReference type="eggNOG" id="KOG3148">
    <property type="taxonomic scope" value="Eukaryota"/>
</dbReference>
<dbReference type="InParanoid" id="A4IHW6"/>
<dbReference type="OrthoDB" id="7663298at2759"/>
<dbReference type="Reactome" id="R-XTR-70171">
    <property type="pathway name" value="Glycolysis"/>
</dbReference>
<dbReference type="Proteomes" id="UP000008143">
    <property type="component" value="Chromosome 1"/>
</dbReference>
<dbReference type="Bgee" id="ENSXETG00000008437">
    <property type="expression patterns" value="Expressed in testis and 12 other cell types or tissues"/>
</dbReference>
<dbReference type="GO" id="GO:0005737">
    <property type="term" value="C:cytoplasm"/>
    <property type="evidence" value="ECO:0007669"/>
    <property type="project" value="UniProtKB-SubCell"/>
</dbReference>
<dbReference type="GO" id="GO:0004342">
    <property type="term" value="F:glucosamine-6-phosphate deaminase activity"/>
    <property type="evidence" value="ECO:0007669"/>
    <property type="project" value="UniProtKB-EC"/>
</dbReference>
<dbReference type="GO" id="GO:0005975">
    <property type="term" value="P:carbohydrate metabolic process"/>
    <property type="evidence" value="ECO:0007669"/>
    <property type="project" value="InterPro"/>
</dbReference>
<dbReference type="GO" id="GO:0006044">
    <property type="term" value="P:N-acetylglucosamine metabolic process"/>
    <property type="evidence" value="ECO:0007669"/>
    <property type="project" value="InterPro"/>
</dbReference>
<dbReference type="CDD" id="cd01399">
    <property type="entry name" value="GlcN6P_deaminase"/>
    <property type="match status" value="1"/>
</dbReference>
<dbReference type="FunFam" id="3.40.50.1360:FF:000004">
    <property type="entry name" value="Glucosamine-6-phosphate isomerase"/>
    <property type="match status" value="1"/>
</dbReference>
<dbReference type="Gene3D" id="3.40.50.1360">
    <property type="match status" value="1"/>
</dbReference>
<dbReference type="HAMAP" id="MF_01241">
    <property type="entry name" value="GlcN6P_deamin"/>
    <property type="match status" value="1"/>
</dbReference>
<dbReference type="InterPro" id="IPR006148">
    <property type="entry name" value="Glc/Gal-6P_isomerase"/>
</dbReference>
<dbReference type="InterPro" id="IPR004547">
    <property type="entry name" value="Glucosamine6P_isomerase"/>
</dbReference>
<dbReference type="InterPro" id="IPR018321">
    <property type="entry name" value="Glucosamine6P_isomerase_CS"/>
</dbReference>
<dbReference type="InterPro" id="IPR037171">
    <property type="entry name" value="NagB/RpiA_transferase-like"/>
</dbReference>
<dbReference type="NCBIfam" id="TIGR00502">
    <property type="entry name" value="nagB"/>
    <property type="match status" value="1"/>
</dbReference>
<dbReference type="PANTHER" id="PTHR11280">
    <property type="entry name" value="GLUCOSAMINE-6-PHOSPHATE ISOMERASE"/>
    <property type="match status" value="1"/>
</dbReference>
<dbReference type="PANTHER" id="PTHR11280:SF9">
    <property type="entry name" value="GLUCOSAMINE-6-PHOSPHATE ISOMERASE 2"/>
    <property type="match status" value="1"/>
</dbReference>
<dbReference type="Pfam" id="PF01182">
    <property type="entry name" value="Glucosamine_iso"/>
    <property type="match status" value="1"/>
</dbReference>
<dbReference type="SUPFAM" id="SSF100950">
    <property type="entry name" value="NagB/RpiA/CoA transferase-like"/>
    <property type="match status" value="1"/>
</dbReference>
<dbReference type="PROSITE" id="PS01161">
    <property type="entry name" value="GLC_GALNAC_ISOMERASE"/>
    <property type="match status" value="1"/>
</dbReference>
<keyword id="KW-0119">Carbohydrate metabolism</keyword>
<keyword id="KW-0175">Coiled coil</keyword>
<keyword id="KW-0963">Cytoplasm</keyword>
<keyword id="KW-0378">Hydrolase</keyword>
<keyword id="KW-1185">Reference proteome</keyword>
<sequence>MRLVILDDYALASEWAAKYICNRIIQFSPGPDKYFTLGLPTGSTPLGCYKKLIEYHKSGDLSFKYVKTFNMDEYVGLPRDHPESYHSYMWNNFFKHIDIDPSNAHILDGNASDLQAECEDFERKIKEAGGIELFVGGIGPDGHIAFNEPGSSLVSRTRLKTLAMDTILANAKYFDGDLSKVPTMALTVGVGTVMDAREVMILITGAHKAFALYKAIEEGVNHMWTVSAFQQHPRTIFVCDEDATLELRVKTVKYFKGLMHVHNRLVDPLHSMKKN</sequence>
<comment type="function">
    <text evidence="2">Catalyzes the reversible conversion of alpha-D-glucosamine 6-phosphate (GlcN-6P) into beta-D-fructose 6-phosphate (Fru-6P) and ammonium ion, a regulatory reaction step in de novo uridine diphosphate-N-acetyl-alpha-D-glucosamine (UDP-GlcNAc) biosynthesis via hexosamine pathway.</text>
</comment>
<comment type="catalytic activity">
    <reaction evidence="2">
        <text>alpha-D-glucosamine 6-phosphate + H2O = beta-D-fructose 6-phosphate + NH4(+)</text>
        <dbReference type="Rhea" id="RHEA:12172"/>
        <dbReference type="ChEBI" id="CHEBI:15377"/>
        <dbReference type="ChEBI" id="CHEBI:28938"/>
        <dbReference type="ChEBI" id="CHEBI:57634"/>
        <dbReference type="ChEBI" id="CHEBI:75989"/>
        <dbReference type="EC" id="3.5.99.6"/>
    </reaction>
</comment>
<comment type="subunit">
    <text evidence="1">Homohexamer.</text>
</comment>
<comment type="subcellular location">
    <subcellularLocation>
        <location evidence="1">Cytoplasm</location>
    </subcellularLocation>
</comment>
<comment type="similarity">
    <text evidence="4">Belongs to the glucosamine/galactosamine-6-phosphate isomerase family.</text>
</comment>
<proteinExistence type="evidence at transcript level"/>
<name>GNPI2_XENTR</name>
<protein>
    <recommendedName>
        <fullName evidence="2">Glucosamine-6-phosphate deaminase 2</fullName>
        <shortName>GlcN6P deaminase 2</shortName>
        <ecNumber evidence="2">3.5.99.6</ecNumber>
    </recommendedName>
    <alternativeName>
        <fullName evidence="2">Glucosamine-6-phosphate isomerase 2</fullName>
    </alternativeName>
</protein>
<feature type="chain" id="PRO_0000343208" description="Glucosamine-6-phosphate deaminase 2">
    <location>
        <begin position="1"/>
        <end position="275"/>
    </location>
</feature>
<feature type="coiled-coil region" evidence="3">
    <location>
        <begin position="103"/>
        <end position="131"/>
    </location>
</feature>
<feature type="active site" description="Proton acceptor; for enolization step" evidence="1">
    <location>
        <position position="72"/>
    </location>
</feature>
<feature type="active site" description="For ring-opening step" evidence="1">
    <location>
        <position position="141"/>
    </location>
</feature>
<feature type="active site" description="Proton acceptor; for ring-opening step" evidence="1">
    <location>
        <position position="143"/>
    </location>
</feature>
<feature type="active site" description="For ring-opening step" evidence="1">
    <location>
        <position position="148"/>
    </location>
</feature>
<evidence type="ECO:0000250" key="1"/>
<evidence type="ECO:0000250" key="2">
    <source>
        <dbReference type="UniProtKB" id="Q8TDQ7"/>
    </source>
</evidence>
<evidence type="ECO:0000255" key="3"/>
<evidence type="ECO:0000305" key="4"/>
<evidence type="ECO:0000312" key="5">
    <source>
        <dbReference type="Proteomes" id="UP000008143"/>
    </source>
</evidence>
<accession>A4IHW6</accession>
<organism evidence="5">
    <name type="scientific">Xenopus tropicalis</name>
    <name type="common">Western clawed frog</name>
    <name type="synonym">Silurana tropicalis</name>
    <dbReference type="NCBI Taxonomy" id="8364"/>
    <lineage>
        <taxon>Eukaryota</taxon>
        <taxon>Metazoa</taxon>
        <taxon>Chordata</taxon>
        <taxon>Craniata</taxon>
        <taxon>Vertebrata</taxon>
        <taxon>Euteleostomi</taxon>
        <taxon>Amphibia</taxon>
        <taxon>Batrachia</taxon>
        <taxon>Anura</taxon>
        <taxon>Pipoidea</taxon>
        <taxon>Pipidae</taxon>
        <taxon>Xenopodinae</taxon>
        <taxon>Xenopus</taxon>
        <taxon>Silurana</taxon>
    </lineage>
</organism>
<gene>
    <name evidence="2" type="primary">gnpda2</name>
</gene>